<dbReference type="EC" id="5.4.2.10" evidence="1"/>
<dbReference type="EMBL" id="AP009351">
    <property type="protein sequence ID" value="BAF68334.1"/>
    <property type="molecule type" value="Genomic_DNA"/>
</dbReference>
<dbReference type="RefSeq" id="WP_000521491.1">
    <property type="nucleotide sequence ID" value="NZ_JBBIAE010000008.1"/>
</dbReference>
<dbReference type="SMR" id="A6QJ02"/>
<dbReference type="KEGG" id="sae:NWMN_2062"/>
<dbReference type="HOGENOM" id="CLU_016950_7_0_9"/>
<dbReference type="Proteomes" id="UP000006386">
    <property type="component" value="Chromosome"/>
</dbReference>
<dbReference type="GO" id="GO:0005829">
    <property type="term" value="C:cytosol"/>
    <property type="evidence" value="ECO:0007669"/>
    <property type="project" value="TreeGrafter"/>
</dbReference>
<dbReference type="GO" id="GO:0000287">
    <property type="term" value="F:magnesium ion binding"/>
    <property type="evidence" value="ECO:0007669"/>
    <property type="project" value="UniProtKB-UniRule"/>
</dbReference>
<dbReference type="GO" id="GO:0008966">
    <property type="term" value="F:phosphoglucosamine mutase activity"/>
    <property type="evidence" value="ECO:0007669"/>
    <property type="project" value="UniProtKB-UniRule"/>
</dbReference>
<dbReference type="GO" id="GO:0004615">
    <property type="term" value="F:phosphomannomutase activity"/>
    <property type="evidence" value="ECO:0007669"/>
    <property type="project" value="TreeGrafter"/>
</dbReference>
<dbReference type="GO" id="GO:0005975">
    <property type="term" value="P:carbohydrate metabolic process"/>
    <property type="evidence" value="ECO:0007669"/>
    <property type="project" value="InterPro"/>
</dbReference>
<dbReference type="GO" id="GO:0009252">
    <property type="term" value="P:peptidoglycan biosynthetic process"/>
    <property type="evidence" value="ECO:0007669"/>
    <property type="project" value="TreeGrafter"/>
</dbReference>
<dbReference type="GO" id="GO:0006048">
    <property type="term" value="P:UDP-N-acetylglucosamine biosynthetic process"/>
    <property type="evidence" value="ECO:0007669"/>
    <property type="project" value="TreeGrafter"/>
</dbReference>
<dbReference type="CDD" id="cd05802">
    <property type="entry name" value="GlmM"/>
    <property type="match status" value="1"/>
</dbReference>
<dbReference type="FunFam" id="3.30.310.50:FF:000001">
    <property type="entry name" value="Phosphoglucosamine mutase"/>
    <property type="match status" value="1"/>
</dbReference>
<dbReference type="FunFam" id="3.40.120.10:FF:000001">
    <property type="entry name" value="Phosphoglucosamine mutase"/>
    <property type="match status" value="1"/>
</dbReference>
<dbReference type="FunFam" id="3.40.120.10:FF:000002">
    <property type="entry name" value="Phosphoglucosamine mutase"/>
    <property type="match status" value="1"/>
</dbReference>
<dbReference type="Gene3D" id="3.40.120.10">
    <property type="entry name" value="Alpha-D-Glucose-1,6-Bisphosphate, subunit A, domain 3"/>
    <property type="match status" value="3"/>
</dbReference>
<dbReference type="Gene3D" id="3.30.310.50">
    <property type="entry name" value="Alpha-D-phosphohexomutase, C-terminal domain"/>
    <property type="match status" value="1"/>
</dbReference>
<dbReference type="HAMAP" id="MF_01554_B">
    <property type="entry name" value="GlmM_B"/>
    <property type="match status" value="1"/>
</dbReference>
<dbReference type="InterPro" id="IPR005844">
    <property type="entry name" value="A-D-PHexomutase_a/b/a-I"/>
</dbReference>
<dbReference type="InterPro" id="IPR016055">
    <property type="entry name" value="A-D-PHexomutase_a/b/a-I/II/III"/>
</dbReference>
<dbReference type="InterPro" id="IPR005845">
    <property type="entry name" value="A-D-PHexomutase_a/b/a-II"/>
</dbReference>
<dbReference type="InterPro" id="IPR005846">
    <property type="entry name" value="A-D-PHexomutase_a/b/a-III"/>
</dbReference>
<dbReference type="InterPro" id="IPR005843">
    <property type="entry name" value="A-D-PHexomutase_C"/>
</dbReference>
<dbReference type="InterPro" id="IPR036900">
    <property type="entry name" value="A-D-PHexomutase_C_sf"/>
</dbReference>
<dbReference type="InterPro" id="IPR016066">
    <property type="entry name" value="A-D-PHexomutase_CS"/>
</dbReference>
<dbReference type="InterPro" id="IPR005841">
    <property type="entry name" value="Alpha-D-phosphohexomutase_SF"/>
</dbReference>
<dbReference type="InterPro" id="IPR006352">
    <property type="entry name" value="GlmM_bact"/>
</dbReference>
<dbReference type="InterPro" id="IPR050060">
    <property type="entry name" value="Phosphoglucosamine_mutase"/>
</dbReference>
<dbReference type="NCBIfam" id="TIGR01455">
    <property type="entry name" value="glmM"/>
    <property type="match status" value="1"/>
</dbReference>
<dbReference type="NCBIfam" id="NF008139">
    <property type="entry name" value="PRK10887.1"/>
    <property type="match status" value="1"/>
</dbReference>
<dbReference type="PANTHER" id="PTHR42946:SF1">
    <property type="entry name" value="PHOSPHOGLUCOMUTASE (ALPHA-D-GLUCOSE-1,6-BISPHOSPHATE-DEPENDENT)"/>
    <property type="match status" value="1"/>
</dbReference>
<dbReference type="PANTHER" id="PTHR42946">
    <property type="entry name" value="PHOSPHOHEXOSE MUTASE"/>
    <property type="match status" value="1"/>
</dbReference>
<dbReference type="Pfam" id="PF02878">
    <property type="entry name" value="PGM_PMM_I"/>
    <property type="match status" value="1"/>
</dbReference>
<dbReference type="Pfam" id="PF02879">
    <property type="entry name" value="PGM_PMM_II"/>
    <property type="match status" value="1"/>
</dbReference>
<dbReference type="Pfam" id="PF02880">
    <property type="entry name" value="PGM_PMM_III"/>
    <property type="match status" value="1"/>
</dbReference>
<dbReference type="Pfam" id="PF00408">
    <property type="entry name" value="PGM_PMM_IV"/>
    <property type="match status" value="1"/>
</dbReference>
<dbReference type="PRINTS" id="PR00509">
    <property type="entry name" value="PGMPMM"/>
</dbReference>
<dbReference type="SUPFAM" id="SSF55957">
    <property type="entry name" value="Phosphoglucomutase, C-terminal domain"/>
    <property type="match status" value="1"/>
</dbReference>
<dbReference type="SUPFAM" id="SSF53738">
    <property type="entry name" value="Phosphoglucomutase, first 3 domains"/>
    <property type="match status" value="3"/>
</dbReference>
<dbReference type="PROSITE" id="PS00710">
    <property type="entry name" value="PGM_PMM"/>
    <property type="match status" value="1"/>
</dbReference>
<evidence type="ECO:0000255" key="1">
    <source>
        <dbReference type="HAMAP-Rule" id="MF_01554"/>
    </source>
</evidence>
<proteinExistence type="inferred from homology"/>
<organism>
    <name type="scientific">Staphylococcus aureus (strain Newman)</name>
    <dbReference type="NCBI Taxonomy" id="426430"/>
    <lineage>
        <taxon>Bacteria</taxon>
        <taxon>Bacillati</taxon>
        <taxon>Bacillota</taxon>
        <taxon>Bacilli</taxon>
        <taxon>Bacillales</taxon>
        <taxon>Staphylococcaceae</taxon>
        <taxon>Staphylococcus</taxon>
    </lineage>
</organism>
<sequence>MGKYFGTDGVRGVANQELTPELAFKLGRYGGYVLAHNKGEKHPRVLVGRDTRVSGEMLESALIAGLISIGAEVMRLGIISTPGVAYLTRDMGAELGVMISASHNPVADNGIKFFGSDGFKLSDEQENEIEALLDQENPELPRPVGNDIVHYSDYFEGAQKYLSYLKSTVDVNFEGLKIALDGANGSTSSLAPFLFGDLEADTETIGCSPDGYNINEKCGSTHPEKLAEKVVETESDFGLAFDGDGDRIIAVDENGQIVDGDQIMFIIGQEMHKNQELNNDMIVSTVMSNLGFYKALEQEGIKSNKTKVGDRYVVEEMRRGNYNLGGEQSGHIVMMDYNTTGDGLLTGIQLASVIKMTGKSLSELAGQMKKYPQSLINVRVTDKYRVEENVDVKEVMTKVEVEMNGEGRILVRPSGTEPLVRVMVEAATDEDAERFAQQIADVVQDKMGLDK</sequence>
<reference key="1">
    <citation type="journal article" date="2008" name="J. Bacteriol.">
        <title>Genome sequence of Staphylococcus aureus strain Newman and comparative analysis of staphylococcal genomes: polymorphism and evolution of two major pathogenicity islands.</title>
        <authorList>
            <person name="Baba T."/>
            <person name="Bae T."/>
            <person name="Schneewind O."/>
            <person name="Takeuchi F."/>
            <person name="Hiramatsu K."/>
        </authorList>
    </citation>
    <scope>NUCLEOTIDE SEQUENCE [LARGE SCALE GENOMIC DNA]</scope>
    <source>
        <strain>Newman</strain>
    </source>
</reference>
<protein>
    <recommendedName>
        <fullName evidence="1">Phosphoglucosamine mutase</fullName>
        <ecNumber evidence="1">5.4.2.10</ecNumber>
    </recommendedName>
</protein>
<feature type="chain" id="PRO_1000073576" description="Phosphoglucosamine mutase">
    <location>
        <begin position="1"/>
        <end position="451"/>
    </location>
</feature>
<feature type="active site" description="Phosphoserine intermediate" evidence="1">
    <location>
        <position position="102"/>
    </location>
</feature>
<feature type="binding site" description="via phosphate group" evidence="1">
    <location>
        <position position="102"/>
    </location>
    <ligand>
        <name>Mg(2+)</name>
        <dbReference type="ChEBI" id="CHEBI:18420"/>
    </ligand>
</feature>
<feature type="binding site" evidence="1">
    <location>
        <position position="242"/>
    </location>
    <ligand>
        <name>Mg(2+)</name>
        <dbReference type="ChEBI" id="CHEBI:18420"/>
    </ligand>
</feature>
<feature type="binding site" evidence="1">
    <location>
        <position position="244"/>
    </location>
    <ligand>
        <name>Mg(2+)</name>
        <dbReference type="ChEBI" id="CHEBI:18420"/>
    </ligand>
</feature>
<feature type="binding site" evidence="1">
    <location>
        <position position="246"/>
    </location>
    <ligand>
        <name>Mg(2+)</name>
        <dbReference type="ChEBI" id="CHEBI:18420"/>
    </ligand>
</feature>
<feature type="modified residue" description="Phosphoserine" evidence="1">
    <location>
        <position position="102"/>
    </location>
</feature>
<keyword id="KW-0413">Isomerase</keyword>
<keyword id="KW-0460">Magnesium</keyword>
<keyword id="KW-0479">Metal-binding</keyword>
<keyword id="KW-0597">Phosphoprotein</keyword>
<accession>A6QJ02</accession>
<gene>
    <name evidence="1" type="primary">glmM</name>
    <name type="ordered locus">NWMN_2062</name>
</gene>
<name>GLMM_STAAE</name>
<comment type="function">
    <text evidence="1">Catalyzes the conversion of glucosamine-6-phosphate to glucosamine-1-phosphate.</text>
</comment>
<comment type="catalytic activity">
    <reaction evidence="1">
        <text>alpha-D-glucosamine 1-phosphate = D-glucosamine 6-phosphate</text>
        <dbReference type="Rhea" id="RHEA:23424"/>
        <dbReference type="ChEBI" id="CHEBI:58516"/>
        <dbReference type="ChEBI" id="CHEBI:58725"/>
        <dbReference type="EC" id="5.4.2.10"/>
    </reaction>
</comment>
<comment type="cofactor">
    <cofactor evidence="1">
        <name>Mg(2+)</name>
        <dbReference type="ChEBI" id="CHEBI:18420"/>
    </cofactor>
    <text evidence="1">Binds 1 Mg(2+) ion per subunit.</text>
</comment>
<comment type="PTM">
    <text evidence="1">Activated by phosphorylation.</text>
</comment>
<comment type="similarity">
    <text evidence="1">Belongs to the phosphohexose mutase family.</text>
</comment>